<reference key="1">
    <citation type="submission" date="2007-07" db="EMBL/GenBank/DDBJ databases">
        <title>Genome sequence of Campylobacter curvus 525.92 isolated from human feces.</title>
        <authorList>
            <person name="Fouts D.E."/>
            <person name="Mongodin E.F."/>
            <person name="Puiu D."/>
            <person name="Sebastian Y."/>
            <person name="Miller W.G."/>
            <person name="Mandrell R.E."/>
            <person name="Lastovica A.J."/>
            <person name="Nelson K.E."/>
        </authorList>
    </citation>
    <scope>NUCLEOTIDE SEQUENCE [LARGE SCALE GENOMIC DNA]</scope>
    <source>
        <strain>525.92</strain>
    </source>
</reference>
<feature type="chain" id="PRO_1000066216" description="Orotate phosphoribosyltransferase">
    <location>
        <begin position="1"/>
        <end position="202"/>
    </location>
</feature>
<feature type="binding site" evidence="1">
    <location>
        <position position="93"/>
    </location>
    <ligand>
        <name>5-phospho-alpha-D-ribose 1-diphosphate</name>
        <dbReference type="ChEBI" id="CHEBI:58017"/>
        <note>ligand shared between dimeric partners</note>
    </ligand>
</feature>
<feature type="binding site" description="in other chain" evidence="1">
    <location>
        <begin position="113"/>
        <end position="121"/>
    </location>
    <ligand>
        <name>5-phospho-alpha-D-ribose 1-diphosphate</name>
        <dbReference type="ChEBI" id="CHEBI:58017"/>
        <note>ligand shared between dimeric partners</note>
    </ligand>
</feature>
<feature type="binding site" evidence="1">
    <location>
        <position position="117"/>
    </location>
    <ligand>
        <name>orotate</name>
        <dbReference type="ChEBI" id="CHEBI:30839"/>
    </ligand>
</feature>
<feature type="binding site" evidence="1">
    <location>
        <position position="145"/>
    </location>
    <ligand>
        <name>orotate</name>
        <dbReference type="ChEBI" id="CHEBI:30839"/>
    </ligand>
</feature>
<proteinExistence type="inferred from homology"/>
<name>PYRE_CAMC5</name>
<accession>A7H149</accession>
<organism>
    <name type="scientific">Campylobacter curvus (strain 525.92)</name>
    <dbReference type="NCBI Taxonomy" id="360105"/>
    <lineage>
        <taxon>Bacteria</taxon>
        <taxon>Pseudomonadati</taxon>
        <taxon>Campylobacterota</taxon>
        <taxon>Epsilonproteobacteria</taxon>
        <taxon>Campylobacterales</taxon>
        <taxon>Campylobacteraceae</taxon>
        <taxon>Campylobacter</taxon>
    </lineage>
</organism>
<evidence type="ECO:0000255" key="1">
    <source>
        <dbReference type="HAMAP-Rule" id="MF_01208"/>
    </source>
</evidence>
<comment type="function">
    <text evidence="1">Catalyzes the transfer of a ribosyl phosphate group from 5-phosphoribose 1-diphosphate to orotate, leading to the formation of orotidine monophosphate (OMP).</text>
</comment>
<comment type="catalytic activity">
    <reaction evidence="1">
        <text>orotidine 5'-phosphate + diphosphate = orotate + 5-phospho-alpha-D-ribose 1-diphosphate</text>
        <dbReference type="Rhea" id="RHEA:10380"/>
        <dbReference type="ChEBI" id="CHEBI:30839"/>
        <dbReference type="ChEBI" id="CHEBI:33019"/>
        <dbReference type="ChEBI" id="CHEBI:57538"/>
        <dbReference type="ChEBI" id="CHEBI:58017"/>
        <dbReference type="EC" id="2.4.2.10"/>
    </reaction>
</comment>
<comment type="cofactor">
    <cofactor evidence="1">
        <name>Mg(2+)</name>
        <dbReference type="ChEBI" id="CHEBI:18420"/>
    </cofactor>
</comment>
<comment type="pathway">
    <text evidence="1">Pyrimidine metabolism; UMP biosynthesis via de novo pathway; UMP from orotate: step 1/2.</text>
</comment>
<comment type="subunit">
    <text evidence="1">Homodimer.</text>
</comment>
<comment type="similarity">
    <text evidence="1">Belongs to the purine/pyrimidine phosphoribosyltransferase family. PyrE subfamily.</text>
</comment>
<sequence>MDLERIYRDAGAYLKGHFLLTSGNHSQFYLQSAKVLEYPQLAGRLADELARIIAAHGVEFDSVCSPALGGILAGYELARAAKKRFIFTERVDKVMTLRRGFEVKKGERFIVCEDIITTGGSALEAANIIKGLGGEVVGFAALANRGFCSLANLKNEAKSNCKLPSDVPLFALGNFEFEIYAPENCPLCASGSQAIKPGSRGN</sequence>
<protein>
    <recommendedName>
        <fullName evidence="1">Orotate phosphoribosyltransferase</fullName>
        <shortName evidence="1">OPRT</shortName>
        <shortName evidence="1">OPRTase</shortName>
        <ecNumber evidence="1">2.4.2.10</ecNumber>
    </recommendedName>
</protein>
<keyword id="KW-0328">Glycosyltransferase</keyword>
<keyword id="KW-0460">Magnesium</keyword>
<keyword id="KW-0665">Pyrimidine biosynthesis</keyword>
<keyword id="KW-1185">Reference proteome</keyword>
<keyword id="KW-0808">Transferase</keyword>
<dbReference type="EC" id="2.4.2.10" evidence="1"/>
<dbReference type="EMBL" id="CP000767">
    <property type="protein sequence ID" value="EAU00876.1"/>
    <property type="molecule type" value="Genomic_DNA"/>
</dbReference>
<dbReference type="RefSeq" id="WP_011992877.1">
    <property type="nucleotide sequence ID" value="NC_009715.2"/>
</dbReference>
<dbReference type="SMR" id="A7H149"/>
<dbReference type="STRING" id="360105.CCV52592_2109"/>
<dbReference type="KEGG" id="ccv:CCV52592_2109"/>
<dbReference type="HOGENOM" id="CLU_074878_3_0_7"/>
<dbReference type="OrthoDB" id="9783570at2"/>
<dbReference type="UniPathway" id="UPA00070">
    <property type="reaction ID" value="UER00119"/>
</dbReference>
<dbReference type="Proteomes" id="UP000006380">
    <property type="component" value="Chromosome"/>
</dbReference>
<dbReference type="GO" id="GO:0000287">
    <property type="term" value="F:magnesium ion binding"/>
    <property type="evidence" value="ECO:0007669"/>
    <property type="project" value="UniProtKB-UniRule"/>
</dbReference>
<dbReference type="GO" id="GO:0004588">
    <property type="term" value="F:orotate phosphoribosyltransferase activity"/>
    <property type="evidence" value="ECO:0007669"/>
    <property type="project" value="UniProtKB-UniRule"/>
</dbReference>
<dbReference type="GO" id="GO:0044205">
    <property type="term" value="P:'de novo' UMP biosynthetic process"/>
    <property type="evidence" value="ECO:0007669"/>
    <property type="project" value="UniProtKB-UniRule"/>
</dbReference>
<dbReference type="GO" id="GO:0019856">
    <property type="term" value="P:pyrimidine nucleobase biosynthetic process"/>
    <property type="evidence" value="ECO:0007669"/>
    <property type="project" value="InterPro"/>
</dbReference>
<dbReference type="CDD" id="cd06223">
    <property type="entry name" value="PRTases_typeI"/>
    <property type="match status" value="1"/>
</dbReference>
<dbReference type="Gene3D" id="3.40.50.2020">
    <property type="match status" value="1"/>
</dbReference>
<dbReference type="HAMAP" id="MF_01208">
    <property type="entry name" value="PyrE"/>
    <property type="match status" value="1"/>
</dbReference>
<dbReference type="InterPro" id="IPR023031">
    <property type="entry name" value="OPRT"/>
</dbReference>
<dbReference type="InterPro" id="IPR006273">
    <property type="entry name" value="Orotate_PRibTrfase_bac"/>
</dbReference>
<dbReference type="InterPro" id="IPR000836">
    <property type="entry name" value="PRibTrfase_dom"/>
</dbReference>
<dbReference type="InterPro" id="IPR029057">
    <property type="entry name" value="PRTase-like"/>
</dbReference>
<dbReference type="NCBIfam" id="TIGR01367">
    <property type="entry name" value="pyrE_Therm"/>
    <property type="match status" value="1"/>
</dbReference>
<dbReference type="PANTHER" id="PTHR19278">
    <property type="entry name" value="OROTATE PHOSPHORIBOSYLTRANSFERASE"/>
    <property type="match status" value="1"/>
</dbReference>
<dbReference type="PANTHER" id="PTHR19278:SF9">
    <property type="entry name" value="URIDINE 5'-MONOPHOSPHATE SYNTHASE"/>
    <property type="match status" value="1"/>
</dbReference>
<dbReference type="Pfam" id="PF00156">
    <property type="entry name" value="Pribosyltran"/>
    <property type="match status" value="1"/>
</dbReference>
<dbReference type="SUPFAM" id="SSF53271">
    <property type="entry name" value="PRTase-like"/>
    <property type="match status" value="1"/>
</dbReference>
<dbReference type="PROSITE" id="PS00103">
    <property type="entry name" value="PUR_PYR_PR_TRANSFER"/>
    <property type="match status" value="1"/>
</dbReference>
<gene>
    <name evidence="1" type="primary">pyrE</name>
    <name type="ordered locus">Ccur92_18870</name>
    <name type="ORF">CCV52592_2109</name>
</gene>